<protein>
    <recommendedName>
        <fullName evidence="1">Proline--tRNA ligase</fullName>
        <ecNumber evidence="1">6.1.1.15</ecNumber>
    </recommendedName>
    <alternativeName>
        <fullName evidence="1">Prolyl-tRNA synthetase</fullName>
        <shortName evidence="1">ProRS</shortName>
    </alternativeName>
</protein>
<proteinExistence type="inferred from homology"/>
<keyword id="KW-0030">Aminoacyl-tRNA synthetase</keyword>
<keyword id="KW-0067">ATP-binding</keyword>
<keyword id="KW-0963">Cytoplasm</keyword>
<keyword id="KW-0436">Ligase</keyword>
<keyword id="KW-0547">Nucleotide-binding</keyword>
<keyword id="KW-0648">Protein biosynthesis</keyword>
<dbReference type="EC" id="6.1.1.15" evidence="1"/>
<dbReference type="EMBL" id="CP000246">
    <property type="protein sequence ID" value="ABG82944.1"/>
    <property type="molecule type" value="Genomic_DNA"/>
</dbReference>
<dbReference type="RefSeq" id="WP_003459370.1">
    <property type="nucleotide sequence ID" value="NC_008261.1"/>
</dbReference>
<dbReference type="SMR" id="Q0TMM3"/>
<dbReference type="STRING" id="195103.CPF_2738"/>
<dbReference type="PaxDb" id="195103-CPF_2738"/>
<dbReference type="KEGG" id="cpf:CPF_2738"/>
<dbReference type="eggNOG" id="COG0442">
    <property type="taxonomic scope" value="Bacteria"/>
</dbReference>
<dbReference type="HOGENOM" id="CLU_016739_0_0_9"/>
<dbReference type="Proteomes" id="UP000001823">
    <property type="component" value="Chromosome"/>
</dbReference>
<dbReference type="GO" id="GO:0005829">
    <property type="term" value="C:cytosol"/>
    <property type="evidence" value="ECO:0007669"/>
    <property type="project" value="TreeGrafter"/>
</dbReference>
<dbReference type="GO" id="GO:0002161">
    <property type="term" value="F:aminoacyl-tRNA deacylase activity"/>
    <property type="evidence" value="ECO:0007669"/>
    <property type="project" value="InterPro"/>
</dbReference>
<dbReference type="GO" id="GO:0005524">
    <property type="term" value="F:ATP binding"/>
    <property type="evidence" value="ECO:0007669"/>
    <property type="project" value="UniProtKB-UniRule"/>
</dbReference>
<dbReference type="GO" id="GO:0140096">
    <property type="term" value="F:catalytic activity, acting on a protein"/>
    <property type="evidence" value="ECO:0007669"/>
    <property type="project" value="UniProtKB-ARBA"/>
</dbReference>
<dbReference type="GO" id="GO:0004827">
    <property type="term" value="F:proline-tRNA ligase activity"/>
    <property type="evidence" value="ECO:0007669"/>
    <property type="project" value="UniProtKB-UniRule"/>
</dbReference>
<dbReference type="GO" id="GO:0016740">
    <property type="term" value="F:transferase activity"/>
    <property type="evidence" value="ECO:0007669"/>
    <property type="project" value="UniProtKB-ARBA"/>
</dbReference>
<dbReference type="GO" id="GO:0006433">
    <property type="term" value="P:prolyl-tRNA aminoacylation"/>
    <property type="evidence" value="ECO:0007669"/>
    <property type="project" value="UniProtKB-UniRule"/>
</dbReference>
<dbReference type="CDD" id="cd04334">
    <property type="entry name" value="ProRS-INS"/>
    <property type="match status" value="1"/>
</dbReference>
<dbReference type="CDD" id="cd00861">
    <property type="entry name" value="ProRS_anticodon_short"/>
    <property type="match status" value="1"/>
</dbReference>
<dbReference type="CDD" id="cd00779">
    <property type="entry name" value="ProRS_core_prok"/>
    <property type="match status" value="1"/>
</dbReference>
<dbReference type="FunFam" id="3.30.930.10:FF:000065">
    <property type="entry name" value="Proline--tRNA ligase"/>
    <property type="match status" value="1"/>
</dbReference>
<dbReference type="FunFam" id="3.30.930.10:FF:000066">
    <property type="entry name" value="Proline--tRNA ligase"/>
    <property type="match status" value="1"/>
</dbReference>
<dbReference type="FunFam" id="3.40.50.800:FF:000011">
    <property type="entry name" value="Proline--tRNA ligase"/>
    <property type="match status" value="1"/>
</dbReference>
<dbReference type="Gene3D" id="3.40.50.800">
    <property type="entry name" value="Anticodon-binding domain"/>
    <property type="match status" value="1"/>
</dbReference>
<dbReference type="Gene3D" id="3.30.930.10">
    <property type="entry name" value="Bira Bifunctional Protein, Domain 2"/>
    <property type="match status" value="2"/>
</dbReference>
<dbReference type="HAMAP" id="MF_01569">
    <property type="entry name" value="Pro_tRNA_synth_type1"/>
    <property type="match status" value="1"/>
</dbReference>
<dbReference type="InterPro" id="IPR002314">
    <property type="entry name" value="aa-tRNA-synt_IIb"/>
</dbReference>
<dbReference type="InterPro" id="IPR006195">
    <property type="entry name" value="aa-tRNA-synth_II"/>
</dbReference>
<dbReference type="InterPro" id="IPR045864">
    <property type="entry name" value="aa-tRNA-synth_II/BPL/LPL"/>
</dbReference>
<dbReference type="InterPro" id="IPR004154">
    <property type="entry name" value="Anticodon-bd"/>
</dbReference>
<dbReference type="InterPro" id="IPR036621">
    <property type="entry name" value="Anticodon-bd_dom_sf"/>
</dbReference>
<dbReference type="InterPro" id="IPR002316">
    <property type="entry name" value="Pro-tRNA-ligase_IIa"/>
</dbReference>
<dbReference type="InterPro" id="IPR004500">
    <property type="entry name" value="Pro-tRNA-synth_IIa_bac-type"/>
</dbReference>
<dbReference type="InterPro" id="IPR023717">
    <property type="entry name" value="Pro-tRNA-Synthase_IIa_type1"/>
</dbReference>
<dbReference type="InterPro" id="IPR050062">
    <property type="entry name" value="Pro-tRNA_synthetase"/>
</dbReference>
<dbReference type="InterPro" id="IPR044140">
    <property type="entry name" value="ProRS_anticodon_short"/>
</dbReference>
<dbReference type="InterPro" id="IPR033730">
    <property type="entry name" value="ProRS_core_prok"/>
</dbReference>
<dbReference type="InterPro" id="IPR036754">
    <property type="entry name" value="YbaK/aa-tRNA-synt-asso_dom_sf"/>
</dbReference>
<dbReference type="InterPro" id="IPR007214">
    <property type="entry name" value="YbaK/aa-tRNA-synth-assoc-dom"/>
</dbReference>
<dbReference type="NCBIfam" id="NF006625">
    <property type="entry name" value="PRK09194.1"/>
    <property type="match status" value="1"/>
</dbReference>
<dbReference type="NCBIfam" id="TIGR00409">
    <property type="entry name" value="proS_fam_II"/>
    <property type="match status" value="1"/>
</dbReference>
<dbReference type="PANTHER" id="PTHR42753">
    <property type="entry name" value="MITOCHONDRIAL RIBOSOME PROTEIN L39/PROLYL-TRNA LIGASE FAMILY MEMBER"/>
    <property type="match status" value="1"/>
</dbReference>
<dbReference type="PANTHER" id="PTHR42753:SF2">
    <property type="entry name" value="PROLINE--TRNA LIGASE"/>
    <property type="match status" value="1"/>
</dbReference>
<dbReference type="Pfam" id="PF03129">
    <property type="entry name" value="HGTP_anticodon"/>
    <property type="match status" value="1"/>
</dbReference>
<dbReference type="Pfam" id="PF00587">
    <property type="entry name" value="tRNA-synt_2b"/>
    <property type="match status" value="1"/>
</dbReference>
<dbReference type="Pfam" id="PF04073">
    <property type="entry name" value="tRNA_edit"/>
    <property type="match status" value="1"/>
</dbReference>
<dbReference type="PIRSF" id="PIRSF001535">
    <property type="entry name" value="ProRS_1"/>
    <property type="match status" value="1"/>
</dbReference>
<dbReference type="PRINTS" id="PR01046">
    <property type="entry name" value="TRNASYNTHPRO"/>
</dbReference>
<dbReference type="SUPFAM" id="SSF52954">
    <property type="entry name" value="Class II aaRS ABD-related"/>
    <property type="match status" value="1"/>
</dbReference>
<dbReference type="SUPFAM" id="SSF55681">
    <property type="entry name" value="Class II aaRS and biotin synthetases"/>
    <property type="match status" value="1"/>
</dbReference>
<dbReference type="SUPFAM" id="SSF55826">
    <property type="entry name" value="YbaK/ProRS associated domain"/>
    <property type="match status" value="1"/>
</dbReference>
<dbReference type="PROSITE" id="PS50862">
    <property type="entry name" value="AA_TRNA_LIGASE_II"/>
    <property type="match status" value="1"/>
</dbReference>
<sequence length="570" mass="63758">MKMSNMLVGTLREVPAEAEIESHKLMLRAGLMRKMAAGIYNYMPLGLKVIENVKNIVREEMNNAGAQEFLASALIPAELWQESGRWDAYGAEMFRLKDRHNRDFCLGPTHEEVFTDIVRNEIKSYKQLPLNLYQIQTKYRDERRPRFGVMRSREFIMKDGYSFDKDQEGLDLAYEKMRKAYVNIFNRCGLDAKAVAADSGAIGGSGSAEFMVKSEVGEDDVVFCTACDYAANIEKAPSTPEHAEKEELMEVEKVETPAVKSIEDLAKFFECSPKKIAKTLIFQADDKVVAVVLRGDREANEVKIANAIGEVIELEMASEEAVKEATGAAVGFAGPMGIKVDMLLVDQEVANMYNFIIGANETDMHLKNVNYGRDFEGIVGDFRNVTIGEKCPECGKEITISRGTEVGHIFKLGTKYSESMGATFIDEDGKAKPFIMGCYGIGVTRTVASIIEQHNDENGIIWPLEVAPYHVSVIPANVKNEEQATKAEEIYNELRKMGVEALLDDRKERAGVKFKDSELMGIPMRITVGKMIGEGQVEFKLRNGGEVETLSIEEVYNRVREEFERANLSL</sequence>
<organism>
    <name type="scientific">Clostridium perfringens (strain ATCC 13124 / DSM 756 / JCM 1290 / NCIMB 6125 / NCTC 8237 / Type A)</name>
    <dbReference type="NCBI Taxonomy" id="195103"/>
    <lineage>
        <taxon>Bacteria</taxon>
        <taxon>Bacillati</taxon>
        <taxon>Bacillota</taxon>
        <taxon>Clostridia</taxon>
        <taxon>Eubacteriales</taxon>
        <taxon>Clostridiaceae</taxon>
        <taxon>Clostridium</taxon>
    </lineage>
</organism>
<evidence type="ECO:0000255" key="1">
    <source>
        <dbReference type="HAMAP-Rule" id="MF_01569"/>
    </source>
</evidence>
<name>SYP_CLOP1</name>
<gene>
    <name evidence="1" type="primary">proS</name>
    <name type="ordered locus">CPF_2738</name>
</gene>
<accession>Q0TMM3</accession>
<comment type="function">
    <text evidence="1">Catalyzes the attachment of proline to tRNA(Pro) in a two-step reaction: proline is first activated by ATP to form Pro-AMP and then transferred to the acceptor end of tRNA(Pro). As ProRS can inadvertently accommodate and process non-cognate amino acids such as alanine and cysteine, to avoid such errors it has two additional distinct editing activities against alanine. One activity is designated as 'pretransfer' editing and involves the tRNA(Pro)-independent hydrolysis of activated Ala-AMP. The other activity is designated 'posttransfer' editing and involves deacylation of mischarged Ala-tRNA(Pro). The misacylated Cys-tRNA(Pro) is not edited by ProRS.</text>
</comment>
<comment type="catalytic activity">
    <reaction evidence="1">
        <text>tRNA(Pro) + L-proline + ATP = L-prolyl-tRNA(Pro) + AMP + diphosphate</text>
        <dbReference type="Rhea" id="RHEA:14305"/>
        <dbReference type="Rhea" id="RHEA-COMP:9700"/>
        <dbReference type="Rhea" id="RHEA-COMP:9702"/>
        <dbReference type="ChEBI" id="CHEBI:30616"/>
        <dbReference type="ChEBI" id="CHEBI:33019"/>
        <dbReference type="ChEBI" id="CHEBI:60039"/>
        <dbReference type="ChEBI" id="CHEBI:78442"/>
        <dbReference type="ChEBI" id="CHEBI:78532"/>
        <dbReference type="ChEBI" id="CHEBI:456215"/>
        <dbReference type="EC" id="6.1.1.15"/>
    </reaction>
</comment>
<comment type="subunit">
    <text evidence="1">Homodimer.</text>
</comment>
<comment type="subcellular location">
    <subcellularLocation>
        <location evidence="1">Cytoplasm</location>
    </subcellularLocation>
</comment>
<comment type="domain">
    <text evidence="1">Consists of three domains: the N-terminal catalytic domain, the editing domain and the C-terminal anticodon-binding domain.</text>
</comment>
<comment type="similarity">
    <text evidence="1">Belongs to the class-II aminoacyl-tRNA synthetase family. ProS type 1 subfamily.</text>
</comment>
<reference key="1">
    <citation type="journal article" date="2006" name="Genome Res.">
        <title>Skewed genomic variability in strains of the toxigenic bacterial pathogen, Clostridium perfringens.</title>
        <authorList>
            <person name="Myers G.S.A."/>
            <person name="Rasko D.A."/>
            <person name="Cheung J.K."/>
            <person name="Ravel J."/>
            <person name="Seshadri R."/>
            <person name="DeBoy R.T."/>
            <person name="Ren Q."/>
            <person name="Varga J."/>
            <person name="Awad M.M."/>
            <person name="Brinkac L.M."/>
            <person name="Daugherty S.C."/>
            <person name="Haft D.H."/>
            <person name="Dodson R.J."/>
            <person name="Madupu R."/>
            <person name="Nelson W.C."/>
            <person name="Rosovitz M.J."/>
            <person name="Sullivan S.A."/>
            <person name="Khouri H."/>
            <person name="Dimitrov G.I."/>
            <person name="Watkins K.L."/>
            <person name="Mulligan S."/>
            <person name="Benton J."/>
            <person name="Radune D."/>
            <person name="Fisher D.J."/>
            <person name="Atkins H.S."/>
            <person name="Hiscox T."/>
            <person name="Jost B.H."/>
            <person name="Billington S.J."/>
            <person name="Songer J.G."/>
            <person name="McClane B.A."/>
            <person name="Titball R.W."/>
            <person name="Rood J.I."/>
            <person name="Melville S.B."/>
            <person name="Paulsen I.T."/>
        </authorList>
    </citation>
    <scope>NUCLEOTIDE SEQUENCE [LARGE SCALE GENOMIC DNA]</scope>
    <source>
        <strain>ATCC 13124 / DSM 756 / JCM 1290 / NCIMB 6125 / NCTC 8237 / S 107 / Type A</strain>
    </source>
</reference>
<feature type="chain" id="PRO_0000288321" description="Proline--tRNA ligase">
    <location>
        <begin position="1"/>
        <end position="570"/>
    </location>
</feature>